<name>PRCA1_BOVIN</name>
<protein>
    <recommendedName>
        <fullName>Protein PROCA1</fullName>
    </recommendedName>
</protein>
<reference key="1">
    <citation type="journal article" date="2009" name="Science">
        <title>The genome sequence of taurine cattle: a window to ruminant biology and evolution.</title>
        <authorList>
            <consortium name="The bovine genome sequencing and analysis consortium"/>
        </authorList>
    </citation>
    <scope>NUCLEOTIDE SEQUENCE [LARGE SCALE GENOMIC DNA]</scope>
    <source>
        <strain>Hereford</strain>
    </source>
</reference>
<reference key="2">
    <citation type="submission" date="2007-08" db="EMBL/GenBank/DDBJ databases">
        <authorList>
            <consortium name="NIH - Mammalian Gene Collection (MGC) project"/>
        </authorList>
    </citation>
    <scope>NUCLEOTIDE SEQUENCE [LARGE SCALE MRNA] OF 1-251</scope>
    <source>
        <strain>Hereford</strain>
        <tissue>Fetal medulla</tissue>
    </source>
</reference>
<keyword id="KW-0597">Phosphoprotein</keyword>
<keyword id="KW-1185">Reference proteome</keyword>
<feature type="chain" id="PRO_0000337249" description="Protein PROCA1">
    <location>
        <begin position="1"/>
        <end position="376"/>
    </location>
</feature>
<feature type="region of interest" description="Disordered" evidence="2">
    <location>
        <begin position="180"/>
        <end position="376"/>
    </location>
</feature>
<feature type="compositionally biased region" description="Acidic residues" evidence="2">
    <location>
        <begin position="180"/>
        <end position="191"/>
    </location>
</feature>
<feature type="compositionally biased region" description="Low complexity" evidence="2">
    <location>
        <begin position="202"/>
        <end position="211"/>
    </location>
</feature>
<feature type="compositionally biased region" description="Polar residues" evidence="2">
    <location>
        <begin position="230"/>
        <end position="241"/>
    </location>
</feature>
<feature type="compositionally biased region" description="Basic residues" evidence="2">
    <location>
        <begin position="243"/>
        <end position="252"/>
    </location>
</feature>
<feature type="compositionally biased region" description="Basic and acidic residues" evidence="2">
    <location>
        <begin position="253"/>
        <end position="264"/>
    </location>
</feature>
<feature type="compositionally biased region" description="Basic residues" evidence="2">
    <location>
        <begin position="265"/>
        <end position="282"/>
    </location>
</feature>
<feature type="compositionally biased region" description="Low complexity" evidence="2">
    <location>
        <begin position="284"/>
        <end position="298"/>
    </location>
</feature>
<feature type="modified residue" description="Phosphoserine" evidence="1">
    <location>
        <position position="319"/>
    </location>
</feature>
<feature type="modified residue" description="Phosphoserine" evidence="1">
    <location>
        <position position="329"/>
    </location>
</feature>
<feature type="modified residue" description="Phosphoserine" evidence="1">
    <location>
        <position position="330"/>
    </location>
</feature>
<feature type="modified residue" description="Phosphoserine" evidence="1">
    <location>
        <position position="367"/>
    </location>
</feature>
<feature type="modified residue" description="Phosphoserine" evidence="1">
    <location>
        <position position="376"/>
    </location>
</feature>
<organism>
    <name type="scientific">Bos taurus</name>
    <name type="common">Bovine</name>
    <dbReference type="NCBI Taxonomy" id="9913"/>
    <lineage>
        <taxon>Eukaryota</taxon>
        <taxon>Metazoa</taxon>
        <taxon>Chordata</taxon>
        <taxon>Craniata</taxon>
        <taxon>Vertebrata</taxon>
        <taxon>Euteleostomi</taxon>
        <taxon>Mammalia</taxon>
        <taxon>Eutheria</taxon>
        <taxon>Laurasiatheria</taxon>
        <taxon>Artiodactyla</taxon>
        <taxon>Ruminantia</taxon>
        <taxon>Pecora</taxon>
        <taxon>Bovidae</taxon>
        <taxon>Bovinae</taxon>
        <taxon>Bos</taxon>
    </lineage>
</organism>
<comment type="similarity">
    <text evidence="3">Belongs to the PROCA1 family.</text>
</comment>
<gene>
    <name type="primary">PROCA1</name>
</gene>
<evidence type="ECO:0000250" key="1">
    <source>
        <dbReference type="UniProtKB" id="Q4V7B4"/>
    </source>
</evidence>
<evidence type="ECO:0000256" key="2">
    <source>
        <dbReference type="SAM" id="MobiDB-lite"/>
    </source>
</evidence>
<evidence type="ECO:0000305" key="3"/>
<accession>A7E371</accession>
<dbReference type="EMBL" id="BC151740">
    <property type="protein sequence ID" value="AAI51741.1"/>
    <property type="molecule type" value="mRNA"/>
</dbReference>
<dbReference type="RefSeq" id="NP_001160040.1">
    <property type="nucleotide sequence ID" value="NM_001166568.1"/>
</dbReference>
<dbReference type="SMR" id="A7E371"/>
<dbReference type="FunCoup" id="A7E371">
    <property type="interactions" value="92"/>
</dbReference>
<dbReference type="STRING" id="9913.ENSBTAP00000044327"/>
<dbReference type="PaxDb" id="9913-ENSBTAP00000044327"/>
<dbReference type="Ensembl" id="ENSBTAT00000113068.1">
    <property type="protein sequence ID" value="ENSBTAP00000091875.1"/>
    <property type="gene ID" value="ENSBTAG00000017268.7"/>
</dbReference>
<dbReference type="GeneID" id="510175"/>
<dbReference type="KEGG" id="bta:510175"/>
<dbReference type="CTD" id="147011"/>
<dbReference type="VEuPathDB" id="HostDB:ENSBTAG00000017268"/>
<dbReference type="VGNC" id="VGNC:33358">
    <property type="gene designation" value="PROCA1"/>
</dbReference>
<dbReference type="eggNOG" id="ENOG502QTYI">
    <property type="taxonomic scope" value="Eukaryota"/>
</dbReference>
<dbReference type="GeneTree" id="ENSGT00940000162235"/>
<dbReference type="HOGENOM" id="CLU_803998_0_0_1"/>
<dbReference type="InParanoid" id="A7E371"/>
<dbReference type="OMA" id="IHPFSDC"/>
<dbReference type="OrthoDB" id="6075074at2759"/>
<dbReference type="TreeFam" id="TF350402"/>
<dbReference type="Proteomes" id="UP000009136">
    <property type="component" value="Chromosome 19"/>
</dbReference>
<dbReference type="Bgee" id="ENSBTAG00000017268">
    <property type="expression patterns" value="Expressed in spermatid and 105 other cell types or tissues"/>
</dbReference>
<dbReference type="GO" id="GO:0004623">
    <property type="term" value="F:phospholipase A2 activity"/>
    <property type="evidence" value="ECO:0007669"/>
    <property type="project" value="InterPro"/>
</dbReference>
<dbReference type="GO" id="GO:0050482">
    <property type="term" value="P:arachidonate secretion"/>
    <property type="evidence" value="ECO:0007669"/>
    <property type="project" value="InterPro"/>
</dbReference>
<dbReference type="GO" id="GO:0006644">
    <property type="term" value="P:phospholipid metabolic process"/>
    <property type="evidence" value="ECO:0007669"/>
    <property type="project" value="InterPro"/>
</dbReference>
<dbReference type="CDD" id="cd04705">
    <property type="entry name" value="PLA2_group_III_like"/>
    <property type="match status" value="1"/>
</dbReference>
<dbReference type="Gene3D" id="1.20.90.10">
    <property type="entry name" value="Phospholipase A2 domain"/>
    <property type="match status" value="1"/>
</dbReference>
<dbReference type="InterPro" id="IPR016090">
    <property type="entry name" value="PLipase_A2_dom"/>
</dbReference>
<dbReference type="InterPro" id="IPR036444">
    <property type="entry name" value="PLipase_A2_dom_sf"/>
</dbReference>
<dbReference type="PANTHER" id="PTHR12253">
    <property type="entry name" value="RH14732P"/>
    <property type="match status" value="1"/>
</dbReference>
<dbReference type="Pfam" id="PF05826">
    <property type="entry name" value="Phospholip_A2_2"/>
    <property type="match status" value="1"/>
</dbReference>
<dbReference type="SUPFAM" id="SSF48619">
    <property type="entry name" value="Phospholipase A2, PLA2"/>
    <property type="match status" value="1"/>
</dbReference>
<sequence>MWVRTTLRIERWTKEKTEDDTSSWDESSTDINRLPSWGRGHLLASVESSTDASTLSSEGEFKNTDRCCWKHKCAGHIVRPFSPDCVHHDVHLHSLSHCDCDSRLKDCSEKTNSSSGDVGPTCSRDVDSTCFDIIQSPCFELIPEEECVERFWYGWCKSYRPVSVAVIHHPIHHECGADDLNQEEEEEEEEESKPPIPTQVGPTPTDSPTDTGMSMITGAPDSAAPITIWRSESPTGKSQGNRVIKKIKKKKEKDKEEETDEKEKAKVKKKVKKGKLMKKKSPVKSESPPDLSRSLSPRELARMSESSPDSRQDLESEDSYNDPGREEPSSEDIVESSSPRKREKNGVQVKKPGLKTSPVKKINKRRSPPASNPNLS</sequence>
<proteinExistence type="evidence at transcript level"/>